<gene>
    <name evidence="1" type="primary">tmk</name>
    <name type="ordered locus">YPA_1920</name>
</gene>
<proteinExistence type="inferred from homology"/>
<comment type="function">
    <text evidence="1">Phosphorylation of dTMP to form dTDP in both de novo and salvage pathways of dTTP synthesis.</text>
</comment>
<comment type="catalytic activity">
    <reaction evidence="1">
        <text>dTMP + ATP = dTDP + ADP</text>
        <dbReference type="Rhea" id="RHEA:13517"/>
        <dbReference type="ChEBI" id="CHEBI:30616"/>
        <dbReference type="ChEBI" id="CHEBI:58369"/>
        <dbReference type="ChEBI" id="CHEBI:63528"/>
        <dbReference type="ChEBI" id="CHEBI:456216"/>
        <dbReference type="EC" id="2.7.4.9"/>
    </reaction>
</comment>
<comment type="similarity">
    <text evidence="1">Belongs to the thymidylate kinase family.</text>
</comment>
<evidence type="ECO:0000255" key="1">
    <source>
        <dbReference type="HAMAP-Rule" id="MF_00165"/>
    </source>
</evidence>
<feature type="chain" id="PRO_1000023317" description="Thymidylate kinase">
    <location>
        <begin position="1"/>
        <end position="212"/>
    </location>
</feature>
<feature type="binding site" evidence="1">
    <location>
        <begin position="10"/>
        <end position="17"/>
    </location>
    <ligand>
        <name>ATP</name>
        <dbReference type="ChEBI" id="CHEBI:30616"/>
    </ligand>
</feature>
<protein>
    <recommendedName>
        <fullName evidence="1">Thymidylate kinase</fullName>
        <ecNumber evidence="1">2.7.4.9</ecNumber>
    </recommendedName>
    <alternativeName>
        <fullName evidence="1">dTMP kinase</fullName>
    </alternativeName>
</protein>
<accession>Q1C6N6</accession>
<sequence length="212" mass="23088">MNSKFIVIEGLEGAGKTTTRDTVVAVLRAQGINDIVFTREPGGTPLAEKLRDLIKQGIDGEVLTDKAEVLMLYAARVQLVENVIKPALARGSWVVGDRHDLSSQAYQGGGRGIDSQLMASLRDTVLGEFRPDLTLYLDLPPAVGLARARARGELDRIEQESLAFFERTRARYLELAASDASIKTIDASQPIEQVSASISQALAQWLTNQEPV</sequence>
<name>KTHY_YERPA</name>
<reference key="1">
    <citation type="journal article" date="2006" name="J. Bacteriol.">
        <title>Complete genome sequence of Yersinia pestis strains Antiqua and Nepal516: evidence of gene reduction in an emerging pathogen.</title>
        <authorList>
            <person name="Chain P.S.G."/>
            <person name="Hu P."/>
            <person name="Malfatti S.A."/>
            <person name="Radnedge L."/>
            <person name="Larimer F."/>
            <person name="Vergez L.M."/>
            <person name="Worsham P."/>
            <person name="Chu M.C."/>
            <person name="Andersen G.L."/>
        </authorList>
    </citation>
    <scope>NUCLEOTIDE SEQUENCE [LARGE SCALE GENOMIC DNA]</scope>
    <source>
        <strain>Antiqua</strain>
    </source>
</reference>
<dbReference type="EC" id="2.7.4.9" evidence="1"/>
<dbReference type="EMBL" id="CP000308">
    <property type="protein sequence ID" value="ABG13886.1"/>
    <property type="molecule type" value="Genomic_DNA"/>
</dbReference>
<dbReference type="RefSeq" id="WP_002213082.1">
    <property type="nucleotide sequence ID" value="NZ_CP009906.1"/>
</dbReference>
<dbReference type="SMR" id="Q1C6N6"/>
<dbReference type="GeneID" id="57976966"/>
<dbReference type="KEGG" id="ypa:YPA_1920"/>
<dbReference type="Proteomes" id="UP000001971">
    <property type="component" value="Chromosome"/>
</dbReference>
<dbReference type="GO" id="GO:0005829">
    <property type="term" value="C:cytosol"/>
    <property type="evidence" value="ECO:0007669"/>
    <property type="project" value="TreeGrafter"/>
</dbReference>
<dbReference type="GO" id="GO:0005524">
    <property type="term" value="F:ATP binding"/>
    <property type="evidence" value="ECO:0007669"/>
    <property type="project" value="UniProtKB-UniRule"/>
</dbReference>
<dbReference type="GO" id="GO:0004798">
    <property type="term" value="F:dTMP kinase activity"/>
    <property type="evidence" value="ECO:0007669"/>
    <property type="project" value="UniProtKB-UniRule"/>
</dbReference>
<dbReference type="GO" id="GO:0006233">
    <property type="term" value="P:dTDP biosynthetic process"/>
    <property type="evidence" value="ECO:0007669"/>
    <property type="project" value="InterPro"/>
</dbReference>
<dbReference type="GO" id="GO:0006235">
    <property type="term" value="P:dTTP biosynthetic process"/>
    <property type="evidence" value="ECO:0007669"/>
    <property type="project" value="UniProtKB-UniRule"/>
</dbReference>
<dbReference type="GO" id="GO:0006227">
    <property type="term" value="P:dUDP biosynthetic process"/>
    <property type="evidence" value="ECO:0007669"/>
    <property type="project" value="TreeGrafter"/>
</dbReference>
<dbReference type="CDD" id="cd01672">
    <property type="entry name" value="TMPK"/>
    <property type="match status" value="1"/>
</dbReference>
<dbReference type="FunFam" id="3.40.50.300:FF:000321">
    <property type="entry name" value="Thymidylate kinase"/>
    <property type="match status" value="1"/>
</dbReference>
<dbReference type="Gene3D" id="3.40.50.300">
    <property type="entry name" value="P-loop containing nucleotide triphosphate hydrolases"/>
    <property type="match status" value="1"/>
</dbReference>
<dbReference type="HAMAP" id="MF_00165">
    <property type="entry name" value="Thymidylate_kinase"/>
    <property type="match status" value="1"/>
</dbReference>
<dbReference type="InterPro" id="IPR027417">
    <property type="entry name" value="P-loop_NTPase"/>
</dbReference>
<dbReference type="InterPro" id="IPR039430">
    <property type="entry name" value="Thymidylate_kin-like_dom"/>
</dbReference>
<dbReference type="InterPro" id="IPR018095">
    <property type="entry name" value="Thymidylate_kin_CS"/>
</dbReference>
<dbReference type="InterPro" id="IPR018094">
    <property type="entry name" value="Thymidylate_kinase"/>
</dbReference>
<dbReference type="NCBIfam" id="TIGR00041">
    <property type="entry name" value="DTMP_kinase"/>
    <property type="match status" value="1"/>
</dbReference>
<dbReference type="PANTHER" id="PTHR10344">
    <property type="entry name" value="THYMIDYLATE KINASE"/>
    <property type="match status" value="1"/>
</dbReference>
<dbReference type="PANTHER" id="PTHR10344:SF4">
    <property type="entry name" value="UMP-CMP KINASE 2, MITOCHONDRIAL"/>
    <property type="match status" value="1"/>
</dbReference>
<dbReference type="Pfam" id="PF02223">
    <property type="entry name" value="Thymidylate_kin"/>
    <property type="match status" value="1"/>
</dbReference>
<dbReference type="SUPFAM" id="SSF52540">
    <property type="entry name" value="P-loop containing nucleoside triphosphate hydrolases"/>
    <property type="match status" value="1"/>
</dbReference>
<dbReference type="PROSITE" id="PS01331">
    <property type="entry name" value="THYMIDYLATE_KINASE"/>
    <property type="match status" value="1"/>
</dbReference>
<keyword id="KW-0067">ATP-binding</keyword>
<keyword id="KW-0418">Kinase</keyword>
<keyword id="KW-0545">Nucleotide biosynthesis</keyword>
<keyword id="KW-0547">Nucleotide-binding</keyword>
<keyword id="KW-0808">Transferase</keyword>
<organism>
    <name type="scientific">Yersinia pestis bv. Antiqua (strain Antiqua)</name>
    <dbReference type="NCBI Taxonomy" id="360102"/>
    <lineage>
        <taxon>Bacteria</taxon>
        <taxon>Pseudomonadati</taxon>
        <taxon>Pseudomonadota</taxon>
        <taxon>Gammaproteobacteria</taxon>
        <taxon>Enterobacterales</taxon>
        <taxon>Yersiniaceae</taxon>
        <taxon>Yersinia</taxon>
    </lineage>
</organism>